<dbReference type="EMBL" id="M62888">
    <property type="protein sequence ID" value="AAA98039.1"/>
    <property type="molecule type" value="Genomic_DNA"/>
</dbReference>
<dbReference type="EMBL" id="AE016833">
    <property type="protein sequence ID" value="AAO83007.1"/>
    <property type="molecule type" value="Genomic_DNA"/>
</dbReference>
<dbReference type="PIR" id="A37391">
    <property type="entry name" value="A37391"/>
</dbReference>
<dbReference type="RefSeq" id="NP_816936.1">
    <property type="nucleotide sequence ID" value="NC_004669.1"/>
</dbReference>
<dbReference type="RefSeq" id="WP_011109599.1">
    <property type="nucleotide sequence ID" value="NZ_KE136530.1"/>
</dbReference>
<dbReference type="EnsemblBacteria" id="AAO83007">
    <property type="protein sequence ID" value="AAO83007"/>
    <property type="gene ID" value="EF_A00051"/>
</dbReference>
<dbReference type="KEGG" id="efa:EFA00051"/>
<dbReference type="HOGENOM" id="CLU_3424700_0_0_9"/>
<dbReference type="Proteomes" id="UP000001415">
    <property type="component" value="Plasmid pTEF1"/>
</dbReference>
<dbReference type="GO" id="GO:0005576">
    <property type="term" value="C:extracellular region"/>
    <property type="evidence" value="ECO:0007669"/>
    <property type="project" value="UniProtKB-SubCell"/>
</dbReference>
<comment type="function">
    <text>Acts as a competitive inhibitor of the CAD1 pheromone.</text>
</comment>
<comment type="subcellular location">
    <subcellularLocation>
        <location evidence="2">Secreted</location>
    </subcellularLocation>
</comment>
<comment type="miscellaneous">
    <text>IAD1 appears to be a component of its own signal sequence.</text>
</comment>
<reference key="1">
    <citation type="journal article" date="1990" name="Plasmid">
        <title>Nucleotide sequence of the sex pheromone inhibitor (iAD1) determinant of Enterococcus faecalis conjugative plasmid pAD1.</title>
        <authorList>
            <person name="Clewell D.B."/>
            <person name="Pontius L.T."/>
            <person name="An F.Y."/>
            <person name="Ike Y."/>
            <person name="Suzuki A."/>
            <person name="Nakayama J."/>
        </authorList>
    </citation>
    <scope>NUCLEOTIDE SEQUENCE [GENOMIC DNA]</scope>
    <source>
        <plasmid>pAD1</plasmid>
    </source>
</reference>
<reference key="2">
    <citation type="journal article" date="2003" name="Science">
        <title>Role of mobile DNA in the evolution of vancomycin-resistant Enterococcus faecalis.</title>
        <authorList>
            <person name="Paulsen I.T."/>
            <person name="Banerjei L."/>
            <person name="Myers G.S.A."/>
            <person name="Nelson K.E."/>
            <person name="Seshadri R."/>
            <person name="Read T.D."/>
            <person name="Fouts D.E."/>
            <person name="Eisen J.A."/>
            <person name="Gill S.R."/>
            <person name="Heidelberg J.F."/>
            <person name="Tettelin H."/>
            <person name="Dodson R.J."/>
            <person name="Umayam L.A."/>
            <person name="Brinkac L.M."/>
            <person name="Beanan M.J."/>
            <person name="Daugherty S.C."/>
            <person name="DeBoy R.T."/>
            <person name="Durkin S.A."/>
            <person name="Kolonay J.F."/>
            <person name="Madupu R."/>
            <person name="Nelson W.C."/>
            <person name="Vamathevan J.J."/>
            <person name="Tran B."/>
            <person name="Upton J."/>
            <person name="Hansen T."/>
            <person name="Shetty J."/>
            <person name="Khouri H.M."/>
            <person name="Utterback T.R."/>
            <person name="Radune D."/>
            <person name="Ketchum K.A."/>
            <person name="Dougherty B.A."/>
            <person name="Fraser C.M."/>
        </authorList>
    </citation>
    <scope>NUCLEOTIDE SEQUENCE [LARGE SCALE GENOMIC DNA]</scope>
    <source>
        <strain>ATCC 700802 / V583</strain>
        <plasmid>pTEF1</plasmid>
    </source>
</reference>
<proteinExistence type="predicted"/>
<name>IAD1_ENTFA</name>
<gene>
    <name type="primary">iad</name>
    <name type="ordered locus">EF_A0005.1</name>
</gene>
<protein>
    <recommendedName>
        <fullName>Sex pheromone inhibitor determinant</fullName>
    </recommendedName>
    <alternativeName>
        <fullName>iAD1</fullName>
    </alternativeName>
</protein>
<accession>P24803</accession>
<organism>
    <name type="scientific">Enterococcus faecalis (strain ATCC 700802 / V583)</name>
    <dbReference type="NCBI Taxonomy" id="226185"/>
    <lineage>
        <taxon>Bacteria</taxon>
        <taxon>Bacillati</taxon>
        <taxon>Bacillota</taxon>
        <taxon>Bacilli</taxon>
        <taxon>Lactobacillales</taxon>
        <taxon>Enterococcaceae</taxon>
        <taxon>Enterococcus</taxon>
    </lineage>
</organism>
<geneLocation type="plasmid">
    <name>pTEF1</name>
</geneLocation>
<geneLocation type="plasmid">
    <name>pAD1</name>
</geneLocation>
<evidence type="ECO:0000255" key="1"/>
<evidence type="ECO:0000305" key="2"/>
<sequence>MSKRAMKKIIPLITLFVVTLVG</sequence>
<keyword id="KW-0614">Plasmid</keyword>
<keyword id="KW-1185">Reference proteome</keyword>
<keyword id="KW-0964">Secreted</keyword>
<feature type="propeptide" id="PRO_0000021476" evidence="1">
    <location>
        <begin position="1"/>
        <end position="14"/>
    </location>
</feature>
<feature type="peptide" id="PRO_0000021477" description="Sex pheromone inhibitor determinant">
    <location>
        <begin position="15"/>
        <end position="22"/>
    </location>
</feature>